<sequence>MKINKKQIVFFILFSIFLNHVNGIFYLPGMIPHDFAQGEEGAIKVNKITSVHTQIPYKYYQLPGVCQPKEGIIDDTENLGEILLGDRIENSDYTFNFLTDGGKCKVINSESCSPIIKKEDLKVLEDRIQNQYRVHWLLDGLPVRQTGRLASDPGFDLGFMTLAEGQTVATAEKYLNNHLEITIFYHSNPTDNTSRIVGFEIFPTSRQYKKVENWKGDTGDDCPQYGENFEQLSVSVKEGEDQERFVLWTYEVKYTPSPVLWNKRWDIYFESNDNSVHWFSILNSLMIVFILTVMVAMIIIRTLKKDIRRYTSIDTSEDRDSQEETGWKMIHGDVFRPPSHPMLLSVCIGSGVQIFSMTLITMIFAVLGFLSPANIGGLATALIVLFVLSAMFAGYFSTRVFTIFKGRNWKKNTIYTALSMPGIIFGIFFFVNMFLRGAKSSAAVPFGTFASIIAMWFGISVPLVFLGSYFASKKPVPEDPVRTNQIPRQVPDQIWYMNPYLSILMGGILPFGAVFIELHFILTSLWDNQFYYIFGFLFIVLMILIVTSAEISIVMCYFQLCAEDHHWWWRSFLTAGSSSLYMFIYSVSFFRYLGITKFISSLLDFSYSFIMSLAFAALTGTIGFYSCYFLVRKIYSSIHIN</sequence>
<proteinExistence type="evidence at transcript level"/>
<feature type="signal peptide" evidence="1">
    <location>
        <begin position="1"/>
        <end position="23"/>
    </location>
</feature>
<feature type="chain" id="PRO_0000327715" description="Putative phagocytic receptor 1a">
    <location>
        <begin position="24"/>
        <end position="641"/>
    </location>
</feature>
<feature type="topological domain" description="Extracellular" evidence="1">
    <location>
        <begin position="24"/>
        <end position="279"/>
    </location>
</feature>
<feature type="transmembrane region" description="Helical" evidence="1">
    <location>
        <begin position="280"/>
        <end position="300"/>
    </location>
</feature>
<feature type="topological domain" description="Cytoplasmic" evidence="1">
    <location>
        <begin position="301"/>
        <end position="349"/>
    </location>
</feature>
<feature type="transmembrane region" description="Helical" evidence="1">
    <location>
        <begin position="350"/>
        <end position="370"/>
    </location>
</feature>
<feature type="topological domain" description="Extracellular" evidence="1">
    <location>
        <begin position="371"/>
        <end position="374"/>
    </location>
</feature>
<feature type="transmembrane region" description="Helical" evidence="1">
    <location>
        <begin position="375"/>
        <end position="395"/>
    </location>
</feature>
<feature type="topological domain" description="Cytoplasmic" evidence="1">
    <location>
        <begin position="396"/>
        <end position="413"/>
    </location>
</feature>
<feature type="transmembrane region" description="Helical" evidence="1">
    <location>
        <begin position="414"/>
        <end position="434"/>
    </location>
</feature>
<feature type="topological domain" description="Extracellular" evidence="1">
    <location>
        <begin position="435"/>
        <end position="445"/>
    </location>
</feature>
<feature type="transmembrane region" description="Helical" evidence="1">
    <location>
        <begin position="446"/>
        <end position="466"/>
    </location>
</feature>
<feature type="topological domain" description="Cytoplasmic" evidence="1">
    <location>
        <begin position="467"/>
        <end position="502"/>
    </location>
</feature>
<feature type="transmembrane region" description="Helical" evidence="1">
    <location>
        <begin position="503"/>
        <end position="523"/>
    </location>
</feature>
<feature type="topological domain" description="Extracellular" evidence="1">
    <location>
        <begin position="524"/>
        <end position="532"/>
    </location>
</feature>
<feature type="transmembrane region" description="Helical" evidence="1">
    <location>
        <begin position="533"/>
        <end position="553"/>
    </location>
</feature>
<feature type="topological domain" description="Cytoplasmic" evidence="1">
    <location>
        <begin position="554"/>
        <end position="578"/>
    </location>
</feature>
<feature type="transmembrane region" description="Helical" evidence="1">
    <location>
        <begin position="579"/>
        <end position="599"/>
    </location>
</feature>
<feature type="topological domain" description="Extracellular" evidence="1">
    <location>
        <begin position="600"/>
        <end position="608"/>
    </location>
</feature>
<feature type="transmembrane region" description="Helical" evidence="1">
    <location>
        <begin position="609"/>
        <end position="629"/>
    </location>
</feature>
<feature type="topological domain" description="Cytoplasmic" evidence="1">
    <location>
        <begin position="630"/>
        <end position="641"/>
    </location>
</feature>
<feature type="sequence conflict" description="In Ref. 1; CAC47950." evidence="6" ref="1">
    <original>D</original>
    <variation>Y</variation>
    <location>
        <position position="604"/>
    </location>
</feature>
<dbReference type="EMBL" id="AJ318760">
    <property type="protein sequence ID" value="CAC47950.1"/>
    <property type="molecule type" value="mRNA"/>
</dbReference>
<dbReference type="EMBL" id="AAFI02000003">
    <property type="protein sequence ID" value="EAL73174.1"/>
    <property type="molecule type" value="Genomic_DNA"/>
</dbReference>
<dbReference type="RefSeq" id="XP_647493.1">
    <property type="nucleotide sequence ID" value="XM_642401.1"/>
</dbReference>
<dbReference type="SMR" id="Q55FP0"/>
<dbReference type="FunCoup" id="Q55FP0">
    <property type="interactions" value="1221"/>
</dbReference>
<dbReference type="STRING" id="44689.Q55FP0"/>
<dbReference type="TCDB" id="8.A.68.1.4">
    <property type="family name" value="the endomembrane protein-70 (emp70) family"/>
</dbReference>
<dbReference type="PaxDb" id="44689-DDB0191123"/>
<dbReference type="ABCD" id="Q55FP0">
    <property type="antibodies" value="4 sequenced antibodies"/>
</dbReference>
<dbReference type="EnsemblProtists" id="EAL73174">
    <property type="protein sequence ID" value="EAL73174"/>
    <property type="gene ID" value="DDB_G0267444"/>
</dbReference>
<dbReference type="GeneID" id="8616300"/>
<dbReference type="KEGG" id="ddi:DDB_G0267444"/>
<dbReference type="dictyBase" id="DDB_G0267444">
    <property type="gene designation" value="phg1A"/>
</dbReference>
<dbReference type="VEuPathDB" id="AmoebaDB:DDB_G0267444"/>
<dbReference type="eggNOG" id="KOG1278">
    <property type="taxonomic scope" value="Eukaryota"/>
</dbReference>
<dbReference type="HOGENOM" id="CLU_010714_4_1_1"/>
<dbReference type="InParanoid" id="Q55FP0"/>
<dbReference type="OMA" id="VVGFEVY"/>
<dbReference type="PhylomeDB" id="Q55FP0"/>
<dbReference type="PRO" id="PR:Q55FP0"/>
<dbReference type="Proteomes" id="UP000002195">
    <property type="component" value="Chromosome 1"/>
</dbReference>
<dbReference type="GO" id="GO:0032009">
    <property type="term" value="C:early phagosome"/>
    <property type="evidence" value="ECO:0000314"/>
    <property type="project" value="dictyBase"/>
</dbReference>
<dbReference type="GO" id="GO:0016020">
    <property type="term" value="C:membrane"/>
    <property type="evidence" value="ECO:0000318"/>
    <property type="project" value="GO_Central"/>
</dbReference>
<dbReference type="GO" id="GO:0005886">
    <property type="term" value="C:plasma membrane"/>
    <property type="evidence" value="ECO:0000304"/>
    <property type="project" value="dictyBase"/>
</dbReference>
<dbReference type="GO" id="GO:0004888">
    <property type="term" value="F:transmembrane signaling receptor activity"/>
    <property type="evidence" value="ECO:0000304"/>
    <property type="project" value="dictyBase"/>
</dbReference>
<dbReference type="GO" id="GO:0019954">
    <property type="term" value="P:asexual reproduction"/>
    <property type="evidence" value="ECO:0000315"/>
    <property type="project" value="dictyBase"/>
</dbReference>
<dbReference type="GO" id="GO:0031589">
    <property type="term" value="P:cell-substrate adhesion"/>
    <property type="evidence" value="ECO:0000315"/>
    <property type="project" value="dictyBase"/>
</dbReference>
<dbReference type="GO" id="GO:0042742">
    <property type="term" value="P:defense response to bacterium"/>
    <property type="evidence" value="ECO:0000315"/>
    <property type="project" value="dictyBase"/>
</dbReference>
<dbReference type="GO" id="GO:0010467">
    <property type="term" value="P:gene expression"/>
    <property type="evidence" value="ECO:0000315"/>
    <property type="project" value="dictyBase"/>
</dbReference>
<dbReference type="GO" id="GO:0007042">
    <property type="term" value="P:lysosomal lumen acidification"/>
    <property type="evidence" value="ECO:0000315"/>
    <property type="project" value="dictyBase"/>
</dbReference>
<dbReference type="GO" id="GO:0006909">
    <property type="term" value="P:phagocytosis"/>
    <property type="evidence" value="ECO:0000315"/>
    <property type="project" value="dictyBase"/>
</dbReference>
<dbReference type="GO" id="GO:0070863">
    <property type="term" value="P:positive regulation of protein exit from endoplasmic reticulum"/>
    <property type="evidence" value="ECO:0000315"/>
    <property type="project" value="UniProtKB"/>
</dbReference>
<dbReference type="GO" id="GO:2000010">
    <property type="term" value="P:positive regulation of protein localization to cell surface"/>
    <property type="evidence" value="ECO:0000315"/>
    <property type="project" value="UniProtKB"/>
</dbReference>
<dbReference type="GO" id="GO:0034394">
    <property type="term" value="P:protein localization to cell surface"/>
    <property type="evidence" value="ECO:0000315"/>
    <property type="project" value="dictyBase"/>
</dbReference>
<dbReference type="GO" id="GO:0061462">
    <property type="term" value="P:protein localization to lysosome"/>
    <property type="evidence" value="ECO:0000315"/>
    <property type="project" value="dictyBase"/>
</dbReference>
<dbReference type="GO" id="GO:0072657">
    <property type="term" value="P:protein localization to membrane"/>
    <property type="evidence" value="ECO:0000315"/>
    <property type="project" value="dictyBase"/>
</dbReference>
<dbReference type="GO" id="GO:0050821">
    <property type="term" value="P:protein stabilization"/>
    <property type="evidence" value="ECO:0000315"/>
    <property type="project" value="dictyBase"/>
</dbReference>
<dbReference type="GO" id="GO:0140460">
    <property type="term" value="P:response to Gram-negative bacterium"/>
    <property type="evidence" value="ECO:0007005"/>
    <property type="project" value="dictyBase"/>
</dbReference>
<dbReference type="GO" id="GO:0033299">
    <property type="term" value="P:secretion of lysosomal enzymes"/>
    <property type="evidence" value="ECO:0000315"/>
    <property type="project" value="dictyBase"/>
</dbReference>
<dbReference type="GO" id="GO:0030587">
    <property type="term" value="P:sorocarp development"/>
    <property type="evidence" value="ECO:0000315"/>
    <property type="project" value="dictyBase"/>
</dbReference>
<dbReference type="InterPro" id="IPR004240">
    <property type="entry name" value="EMP70"/>
</dbReference>
<dbReference type="InterPro" id="IPR036259">
    <property type="entry name" value="MFS_trans_sf"/>
</dbReference>
<dbReference type="PANTHER" id="PTHR10766:SF111">
    <property type="entry name" value="TRANSMEMBRANE 9 SUPERFAMILY MEMBER 2"/>
    <property type="match status" value="1"/>
</dbReference>
<dbReference type="PANTHER" id="PTHR10766">
    <property type="entry name" value="TRANSMEMBRANE 9 SUPERFAMILY PROTEIN"/>
    <property type="match status" value="1"/>
</dbReference>
<dbReference type="Pfam" id="PF02990">
    <property type="entry name" value="EMP70"/>
    <property type="match status" value="1"/>
</dbReference>
<dbReference type="SUPFAM" id="SSF103473">
    <property type="entry name" value="MFS general substrate transporter"/>
    <property type="match status" value="1"/>
</dbReference>
<gene>
    <name type="primary">phg1a</name>
    <name type="synonym">phg1</name>
    <name type="ORF">DDB_G0267444</name>
</gene>
<reference key="1">
    <citation type="journal article" date="2000" name="J. Biol. Chem.">
        <title>Phg1p is a nine-transmembrane protein superfamily member involved in dictyostelium adhesion and phagocytosis.</title>
        <authorList>
            <person name="Cornillon S."/>
            <person name="Pech E."/>
            <person name="Benghezal M."/>
            <person name="Ravanel K."/>
            <person name="Gaynor E."/>
            <person name="Letourneur F."/>
            <person name="Bruckert F."/>
            <person name="Cosson P."/>
        </authorList>
    </citation>
    <scope>NUCLEOTIDE SEQUENCE [GENOMIC DNA]</scope>
    <scope>FUNCTION</scope>
    <source>
        <strain>AX3 / DH1</strain>
    </source>
</reference>
<reference key="2">
    <citation type="journal article" date="2003" name="Mol. Biol. Cell">
        <title>Synergistic control of cellular adhesion by transmembrane 9 proteins.</title>
        <authorList>
            <person name="Benghezal M."/>
            <person name="Cornillon S."/>
            <person name="Gebbie L."/>
            <person name="Alibaud L."/>
            <person name="Bruckert F."/>
            <person name="Letourneur F."/>
            <person name="Cosson P."/>
        </authorList>
    </citation>
    <scope>NUCLEOTIDE SEQUENCE [MRNA]</scope>
    <scope>FUNCTION</scope>
    <source>
        <strain>AX3 / DH1</strain>
    </source>
</reference>
<reference key="3">
    <citation type="journal article" date="2005" name="Nature">
        <title>The genome of the social amoeba Dictyostelium discoideum.</title>
        <authorList>
            <person name="Eichinger L."/>
            <person name="Pachebat J.A."/>
            <person name="Gloeckner G."/>
            <person name="Rajandream M.A."/>
            <person name="Sucgang R."/>
            <person name="Berriman M."/>
            <person name="Song J."/>
            <person name="Olsen R."/>
            <person name="Szafranski K."/>
            <person name="Xu Q."/>
            <person name="Tunggal B."/>
            <person name="Kummerfeld S."/>
            <person name="Madera M."/>
            <person name="Konfortov B.A."/>
            <person name="Rivero F."/>
            <person name="Bankier A.T."/>
            <person name="Lehmann R."/>
            <person name="Hamlin N."/>
            <person name="Davies R."/>
            <person name="Gaudet P."/>
            <person name="Fey P."/>
            <person name="Pilcher K."/>
            <person name="Chen G."/>
            <person name="Saunders D."/>
            <person name="Sodergren E.J."/>
            <person name="Davis P."/>
            <person name="Kerhornou A."/>
            <person name="Nie X."/>
            <person name="Hall N."/>
            <person name="Anjard C."/>
            <person name="Hemphill L."/>
            <person name="Bason N."/>
            <person name="Farbrother P."/>
            <person name="Desany B."/>
            <person name="Just E."/>
            <person name="Morio T."/>
            <person name="Rost R."/>
            <person name="Churcher C.M."/>
            <person name="Cooper J."/>
            <person name="Haydock S."/>
            <person name="van Driessche N."/>
            <person name="Cronin A."/>
            <person name="Goodhead I."/>
            <person name="Muzny D.M."/>
            <person name="Mourier T."/>
            <person name="Pain A."/>
            <person name="Lu M."/>
            <person name="Harper D."/>
            <person name="Lindsay R."/>
            <person name="Hauser H."/>
            <person name="James K.D."/>
            <person name="Quiles M."/>
            <person name="Madan Babu M."/>
            <person name="Saito T."/>
            <person name="Buchrieser C."/>
            <person name="Wardroper A."/>
            <person name="Felder M."/>
            <person name="Thangavelu M."/>
            <person name="Johnson D."/>
            <person name="Knights A."/>
            <person name="Loulseged H."/>
            <person name="Mungall K.L."/>
            <person name="Oliver K."/>
            <person name="Price C."/>
            <person name="Quail M.A."/>
            <person name="Urushihara H."/>
            <person name="Hernandez J."/>
            <person name="Rabbinowitsch E."/>
            <person name="Steffen D."/>
            <person name="Sanders M."/>
            <person name="Ma J."/>
            <person name="Kohara Y."/>
            <person name="Sharp S."/>
            <person name="Simmonds M.N."/>
            <person name="Spiegler S."/>
            <person name="Tivey A."/>
            <person name="Sugano S."/>
            <person name="White B."/>
            <person name="Walker D."/>
            <person name="Woodward J.R."/>
            <person name="Winckler T."/>
            <person name="Tanaka Y."/>
            <person name="Shaulsky G."/>
            <person name="Schleicher M."/>
            <person name="Weinstock G.M."/>
            <person name="Rosenthal A."/>
            <person name="Cox E.C."/>
            <person name="Chisholm R.L."/>
            <person name="Gibbs R.A."/>
            <person name="Loomis W.F."/>
            <person name="Platzer M."/>
            <person name="Kay R.R."/>
            <person name="Williams J.G."/>
            <person name="Dear P.H."/>
            <person name="Noegel A.A."/>
            <person name="Barrell B.G."/>
            <person name="Kuspa A."/>
        </authorList>
    </citation>
    <scope>NUCLEOTIDE SEQUENCE [LARGE SCALE GENOMIC DNA]</scope>
    <source>
        <strain>AX4</strain>
    </source>
</reference>
<reference key="4">
    <citation type="journal article" date="2006" name="Cell. Microbiol.">
        <title>Specific host genes required for the killing of Klebsiella bacteria by phagocytes.</title>
        <authorList>
            <person name="Benghezal M."/>
            <person name="Fauvarque M.O."/>
            <person name="Tournebize R."/>
            <person name="Froquet R."/>
            <person name="Marchetti A."/>
            <person name="Bergeret E."/>
            <person name="Lardy B."/>
            <person name="Klein G."/>
            <person name="Sansonetti P."/>
            <person name="Charette S.J."/>
            <person name="Cosson P."/>
        </authorList>
    </citation>
    <scope>FUNCTION</scope>
</reference>
<reference key="5">
    <citation type="journal article" date="2015" name="J. Cell Sci.">
        <title>TM9 family proteins control surface targeting of glycine-rich transmembrane domains.</title>
        <authorList>
            <person name="Perrin J."/>
            <person name="Le Coadic M."/>
            <person name="Vernay A."/>
            <person name="Dias M."/>
            <person name="Gopaldass N."/>
            <person name="Ouertatani-Sakouhi H."/>
            <person name="Cosson P."/>
        </authorList>
    </citation>
    <scope>FUNCTION</scope>
</reference>
<accession>Q55FP0</accession>
<accession>Q95ZG2</accession>
<comment type="function">
    <text evidence="2 3 4 5">Involved in adhesion, phagocytosis of hydrophilic particles and intracellular killing of bacteria (PubMed:10944536, PubMed:12857872, PubMed:16367873). Associates with proteins harboring glycine-rich transmembrane domains and ensures their efficient localization to the cell surface (PubMed:25999474).</text>
</comment>
<comment type="subcellular location">
    <subcellularLocation>
        <location evidence="1">Membrane</location>
        <topology evidence="1">Multi-pass membrane protein</topology>
    </subcellularLocation>
</comment>
<comment type="similarity">
    <text evidence="6">Belongs to the nonaspanin (TM9SF) (TC 9.A.2) family.</text>
</comment>
<protein>
    <recommendedName>
        <fullName>Putative phagocytic receptor 1a</fullName>
    </recommendedName>
</protein>
<organism>
    <name type="scientific">Dictyostelium discoideum</name>
    <name type="common">Social amoeba</name>
    <dbReference type="NCBI Taxonomy" id="44689"/>
    <lineage>
        <taxon>Eukaryota</taxon>
        <taxon>Amoebozoa</taxon>
        <taxon>Evosea</taxon>
        <taxon>Eumycetozoa</taxon>
        <taxon>Dictyostelia</taxon>
        <taxon>Dictyosteliales</taxon>
        <taxon>Dictyosteliaceae</taxon>
        <taxon>Dictyostelium</taxon>
    </lineage>
</organism>
<evidence type="ECO:0000255" key="1"/>
<evidence type="ECO:0000269" key="2">
    <source>
    </source>
</evidence>
<evidence type="ECO:0000269" key="3">
    <source>
    </source>
</evidence>
<evidence type="ECO:0000269" key="4">
    <source>
    </source>
</evidence>
<evidence type="ECO:0000269" key="5">
    <source>
    </source>
</evidence>
<evidence type="ECO:0000305" key="6"/>
<keyword id="KW-0472">Membrane</keyword>
<keyword id="KW-0675">Receptor</keyword>
<keyword id="KW-1185">Reference proteome</keyword>
<keyword id="KW-0732">Signal</keyword>
<keyword id="KW-0812">Transmembrane</keyword>
<keyword id="KW-1133">Transmembrane helix</keyword>
<name>PHG1A_DICDI</name>